<name>ERFE_HUMAN</name>
<proteinExistence type="evidence at protein level"/>
<evidence type="ECO:0000250" key="1">
    <source>
        <dbReference type="UniProtKB" id="Q6PGN1"/>
    </source>
</evidence>
<evidence type="ECO:0000255" key="2"/>
<evidence type="ECO:0000255" key="3">
    <source>
        <dbReference type="PROSITE-ProRule" id="PRU00368"/>
    </source>
</evidence>
<evidence type="ECO:0000256" key="4">
    <source>
        <dbReference type="SAM" id="MobiDB-lite"/>
    </source>
</evidence>
<evidence type="ECO:0000269" key="5">
    <source>
    </source>
</evidence>
<evidence type="ECO:0000269" key="6">
    <source>
    </source>
</evidence>
<evidence type="ECO:0000269" key="7">
    <source>
    </source>
</evidence>
<evidence type="ECO:0000305" key="8"/>
<evidence type="ECO:0000312" key="9">
    <source>
        <dbReference type="HGNC" id="HGNC:26727"/>
    </source>
</evidence>
<protein>
    <recommendedName>
        <fullName evidence="9">Erythroferrone</fullName>
    </recommendedName>
    <alternativeName>
        <fullName>Complement C1q tumor necrosis factor-related protein 15</fullName>
    </alternativeName>
    <alternativeName>
        <fullName evidence="1">Myonectin</fullName>
    </alternativeName>
</protein>
<comment type="function">
    <text evidence="1 5 6 7">Iron-regulatory hormone that acts as an erythroid regulator after hemorrhage: produced by erythroblasts following blood loss and mediates suppression of hepcidin (HAMP) expression in the liver, thereby promoting increased iron absorption and mobilization from stores (PubMed:24880340, PubMed:30097509, PubMed:31800957). Promotes lipid uptake into adipocytes and hepatocytes via transcriptional up-regulation of genes involved in fatty acid uptake (By similarity). Inhibits apoptosis and inflammatory response in cardiomyocytes via promotion of sphingosine-1-phosphate (S1P) and cAMP-dependent activation of AKT signaling (By similarity). Inhibits autophagy induced by nutrient deficiency in hepatocytes via promoting the phosphorylation of IRS1, AKT, and MTOR, and thereby subsequent activation of the AKT-MTOR signaling pathway (By similarity). Negatively regulates the differentiation of osteoblasts, potentially via sequestering BMP2, and thereby inhibits the activation of SMAD signaling (By similarity). The reduction in BMP2 signaling in osteoblasts also results in an increase in expression of the osteoclastogenesis-promoting factors TNFSF11/RANKL and SOST, thereby indirectly promotes bone resorption (By similarity).</text>
</comment>
<comment type="subunit">
    <text evidence="1 6 7">Homodimer; disulfide-linked (By similarity). Forms trimer, hexamers and higher molecular weight oligomers (By similarity). May form heteromeric complexes with C1QTNF2 and C1QTNF12 and, to a lesser extent, with C1QTNF5 and C1QTNF10 (By similarity). Interacts with BMP5 and BMP7; the interaction inhibits BMP-induced transcription of HAMP (PubMed:30097509). Interacts with BMP6; the interaction inhibits BMP-induced transcription of HAMP (PubMed:30097509, PubMed:31800957). Interacts with BMP2 (PubMed:31800957). Interacts with heterodimers composed of BMP2 and BMP6 in vitro, the interaction inhibits the heterodimer binding to its receptor BMPR1A /ALK3 and thereby suppresses expression of HAMP (PubMed:31800957).</text>
</comment>
<comment type="subcellular location">
    <subcellularLocation>
        <location evidence="1">Secreted</location>
    </subcellularLocation>
    <text evidence="1">Secreted when glycosylated at Asn-243 and Asn-295 (By similarity). Hydroxylation promotes secretion (By similarity).</text>
</comment>
<comment type="PTM">
    <text evidence="1">N-glycosylated; required for secretion of the mature protein.</text>
</comment>
<comment type="similarity">
    <text evidence="8">Belongs to the adipolin/erythroferrone family.</text>
</comment>
<feature type="signal peptide" evidence="2">
    <location>
        <begin position="1"/>
        <end position="28"/>
    </location>
</feature>
<feature type="chain" id="PRO_0000340250" description="Erythroferrone">
    <location>
        <begin position="29"/>
        <end position="354"/>
    </location>
</feature>
<feature type="domain" description="C1q" evidence="3">
    <location>
        <begin position="199"/>
        <end position="354"/>
    </location>
</feature>
<feature type="region of interest" description="Disordered" evidence="4">
    <location>
        <begin position="26"/>
        <end position="123"/>
    </location>
</feature>
<feature type="compositionally biased region" description="Low complexity" evidence="4">
    <location>
        <begin position="26"/>
        <end position="37"/>
    </location>
</feature>
<feature type="compositionally biased region" description="Low complexity" evidence="4">
    <location>
        <begin position="51"/>
        <end position="62"/>
    </location>
</feature>
<feature type="compositionally biased region" description="Basic and acidic residues" evidence="4">
    <location>
        <begin position="69"/>
        <end position="80"/>
    </location>
</feature>
<feature type="compositionally biased region" description="Basic residues" evidence="4">
    <location>
        <begin position="94"/>
        <end position="107"/>
    </location>
</feature>
<feature type="compositionally biased region" description="Pro residues" evidence="4">
    <location>
        <begin position="111"/>
        <end position="123"/>
    </location>
</feature>
<feature type="site" description="Required for correct protein folding in the endoplasmic reticulum" evidence="1">
    <location>
        <position position="333"/>
    </location>
</feature>
<feature type="modified residue" description="Hydroxyproline" evidence="1">
    <location>
        <position position="111"/>
    </location>
</feature>
<feature type="modified residue" description="Hydroxyproline" evidence="1">
    <location>
        <position position="113"/>
    </location>
</feature>
<feature type="modified residue" description="Hydroxyproline" evidence="1">
    <location>
        <position position="114"/>
    </location>
</feature>
<feature type="modified residue" description="Hydroxyproline" evidence="1">
    <location>
        <position position="116"/>
    </location>
</feature>
<feature type="modified residue" description="Hydroxyproline" evidence="1">
    <location>
        <position position="117"/>
    </location>
</feature>
<feature type="modified residue" description="Hydroxyproline" evidence="1">
    <location>
        <position position="119"/>
    </location>
</feature>
<feature type="glycosylation site" description="N-linked (GlcNAc...) asparagine" evidence="1 2">
    <location>
        <position position="243"/>
    </location>
</feature>
<feature type="glycosylation site" description="N-linked (GlcNAc...) asparagine" evidence="1 2">
    <location>
        <position position="295"/>
    </location>
</feature>
<feature type="glycosylation site" description="N-linked (GlcNAc...) asparagine" evidence="2">
    <location>
        <position position="333"/>
    </location>
</feature>
<feature type="sequence conflict" description="In Ref. 3; AAH47423." evidence="8" ref="3">
    <original>ALHELGVYYL</original>
    <variation>SRGDHPCPSQ</variation>
    <location>
        <begin position="220"/>
        <end position="229"/>
    </location>
</feature>
<dbReference type="EMBL" id="KF984314">
    <property type="protein sequence ID" value="AHL84165.1"/>
    <property type="molecule type" value="mRNA"/>
</dbReference>
<dbReference type="EMBL" id="AC016757">
    <property type="status" value="NOT_ANNOTATED_CDS"/>
    <property type="molecule type" value="Genomic_DNA"/>
</dbReference>
<dbReference type="EMBL" id="BC047423">
    <property type="protein sequence ID" value="AAH47423.1"/>
    <property type="molecule type" value="mRNA"/>
</dbReference>
<dbReference type="CCDS" id="CCDS77548.1"/>
<dbReference type="RefSeq" id="NP_001278761.1">
    <property type="nucleotide sequence ID" value="NM_001291832.2"/>
</dbReference>
<dbReference type="BioGRID" id="127350">
    <property type="interactions" value="45"/>
</dbReference>
<dbReference type="FunCoup" id="Q4G0M1">
    <property type="interactions" value="314"/>
</dbReference>
<dbReference type="IntAct" id="Q4G0M1">
    <property type="interactions" value="25"/>
</dbReference>
<dbReference type="STRING" id="9606.ENSP00000442304"/>
<dbReference type="GlyCosmos" id="Q4G0M1">
    <property type="glycosylation" value="3 sites, No reported glycans"/>
</dbReference>
<dbReference type="GlyGen" id="Q4G0M1">
    <property type="glycosylation" value="5 sites, 1 N-linked glycan (1 site), 1 O-linked glycan (2 sites)"/>
</dbReference>
<dbReference type="iPTMnet" id="Q4G0M1"/>
<dbReference type="PhosphoSitePlus" id="Q4G0M1"/>
<dbReference type="BioMuta" id="ERFE"/>
<dbReference type="DMDM" id="190359335"/>
<dbReference type="jPOST" id="Q4G0M1"/>
<dbReference type="MassIVE" id="Q4G0M1"/>
<dbReference type="PaxDb" id="9606-ENSP00000442304"/>
<dbReference type="PeptideAtlas" id="Q4G0M1"/>
<dbReference type="ProteomicsDB" id="62110"/>
<dbReference type="Antibodypedia" id="77392">
    <property type="antibodies" value="5 antibodies from 5 providers"/>
</dbReference>
<dbReference type="DNASU" id="151176"/>
<dbReference type="Ensembl" id="ENST00000546354.6">
    <property type="protein sequence ID" value="ENSP00000442304.1"/>
    <property type="gene ID" value="ENSG00000178752.16"/>
</dbReference>
<dbReference type="GeneID" id="151176"/>
<dbReference type="KEGG" id="hsa:151176"/>
<dbReference type="MANE-Select" id="ENST00000546354.6">
    <property type="protein sequence ID" value="ENSP00000442304.1"/>
    <property type="RefSeq nucleotide sequence ID" value="NM_001291832.2"/>
    <property type="RefSeq protein sequence ID" value="NP_001278761.1"/>
</dbReference>
<dbReference type="UCSC" id="uc061udn.1">
    <property type="organism name" value="human"/>
</dbReference>
<dbReference type="AGR" id="HGNC:26727"/>
<dbReference type="CTD" id="151176"/>
<dbReference type="DisGeNET" id="151176"/>
<dbReference type="GeneCards" id="ERFE"/>
<dbReference type="HGNC" id="HGNC:26727">
    <property type="gene designation" value="ERFE"/>
</dbReference>
<dbReference type="HPA" id="ENSG00000178752">
    <property type="expression patterns" value="Tissue enhanced (kidney, skeletal muscle, testis, thyroid gland)"/>
</dbReference>
<dbReference type="MIM" id="615099">
    <property type="type" value="gene"/>
</dbReference>
<dbReference type="neXtProt" id="NX_Q4G0M1"/>
<dbReference type="OpenTargets" id="ENSG00000178752"/>
<dbReference type="VEuPathDB" id="HostDB:ENSG00000178752"/>
<dbReference type="eggNOG" id="ENOG502RNS4">
    <property type="taxonomic scope" value="Eukaryota"/>
</dbReference>
<dbReference type="GeneTree" id="ENSGT00940000162100"/>
<dbReference type="HOGENOM" id="CLU_057344_1_1_1"/>
<dbReference type="InParanoid" id="Q4G0M1"/>
<dbReference type="OMA" id="MGQWASV"/>
<dbReference type="OrthoDB" id="6360045at2759"/>
<dbReference type="PAN-GO" id="Q4G0M1">
    <property type="GO annotations" value="5 GO annotations based on evolutionary models"/>
</dbReference>
<dbReference type="PhylomeDB" id="Q4G0M1"/>
<dbReference type="TreeFam" id="TF331282"/>
<dbReference type="PathwayCommons" id="Q4G0M1"/>
<dbReference type="SignaLink" id="Q4G0M1"/>
<dbReference type="BioGRID-ORCS" id="151176">
    <property type="hits" value="4 hits in 275 CRISPR screens"/>
</dbReference>
<dbReference type="ChiTaRS" id="ERFE">
    <property type="organism name" value="human"/>
</dbReference>
<dbReference type="GenomeRNAi" id="151176"/>
<dbReference type="Pharos" id="Q4G0M1">
    <property type="development level" value="Tbio"/>
</dbReference>
<dbReference type="PRO" id="PR:Q4G0M1"/>
<dbReference type="Proteomes" id="UP000005640">
    <property type="component" value="Chromosome 2"/>
</dbReference>
<dbReference type="RNAct" id="Q4G0M1">
    <property type="molecule type" value="protein"/>
</dbReference>
<dbReference type="Bgee" id="ENSG00000178752">
    <property type="expression patterns" value="Expressed in tibialis anterior and 113 other cell types or tissues"/>
</dbReference>
<dbReference type="ExpressionAtlas" id="Q4G0M1">
    <property type="expression patterns" value="baseline and differential"/>
</dbReference>
<dbReference type="GO" id="GO:0005576">
    <property type="term" value="C:extracellular region"/>
    <property type="evidence" value="ECO:0000250"/>
    <property type="project" value="UniProtKB"/>
</dbReference>
<dbReference type="GO" id="GO:0005615">
    <property type="term" value="C:extracellular space"/>
    <property type="evidence" value="ECO:0000250"/>
    <property type="project" value="UniProtKB"/>
</dbReference>
<dbReference type="GO" id="GO:0005179">
    <property type="term" value="F:hormone activity"/>
    <property type="evidence" value="ECO:0000250"/>
    <property type="project" value="UniProtKB"/>
</dbReference>
<dbReference type="GO" id="GO:0042802">
    <property type="term" value="F:identical protein binding"/>
    <property type="evidence" value="ECO:0007669"/>
    <property type="project" value="Ensembl"/>
</dbReference>
<dbReference type="GO" id="GO:0140313">
    <property type="term" value="F:molecular sequestering activity"/>
    <property type="evidence" value="ECO:0000314"/>
    <property type="project" value="UniProt"/>
</dbReference>
<dbReference type="GO" id="GO:0051649">
    <property type="term" value="P:establishment of localization in cell"/>
    <property type="evidence" value="ECO:0007669"/>
    <property type="project" value="Ensembl"/>
</dbReference>
<dbReference type="GO" id="GO:0015908">
    <property type="term" value="P:fatty acid transport"/>
    <property type="evidence" value="ECO:0007669"/>
    <property type="project" value="Ensembl"/>
</dbReference>
<dbReference type="GO" id="GO:0006879">
    <property type="term" value="P:intracellular iron ion homeostasis"/>
    <property type="evidence" value="ECO:0000250"/>
    <property type="project" value="UniProtKB"/>
</dbReference>
<dbReference type="GO" id="GO:0043066">
    <property type="term" value="P:negative regulation of apoptotic process"/>
    <property type="evidence" value="ECO:0000250"/>
    <property type="project" value="UniProtKB"/>
</dbReference>
<dbReference type="GO" id="GO:0010507">
    <property type="term" value="P:negative regulation of autophagy"/>
    <property type="evidence" value="ECO:0000250"/>
    <property type="project" value="UniProtKB"/>
</dbReference>
<dbReference type="GO" id="GO:0030514">
    <property type="term" value="P:negative regulation of BMP signaling pathway"/>
    <property type="evidence" value="ECO:0000314"/>
    <property type="project" value="UniProt"/>
</dbReference>
<dbReference type="GO" id="GO:0045721">
    <property type="term" value="P:negative regulation of gluconeogenesis"/>
    <property type="evidence" value="ECO:0000318"/>
    <property type="project" value="GO_Central"/>
</dbReference>
<dbReference type="GO" id="GO:0045668">
    <property type="term" value="P:negative regulation of osteoblast differentiation"/>
    <property type="evidence" value="ECO:0000250"/>
    <property type="project" value="UniProtKB"/>
</dbReference>
<dbReference type="GO" id="GO:0045671">
    <property type="term" value="P:negative regulation of osteoclast differentiation"/>
    <property type="evidence" value="ECO:0000250"/>
    <property type="project" value="UniProtKB"/>
</dbReference>
<dbReference type="GO" id="GO:0046326">
    <property type="term" value="P:positive regulation of D-glucose import"/>
    <property type="evidence" value="ECO:0000318"/>
    <property type="project" value="GO_Central"/>
</dbReference>
<dbReference type="GO" id="GO:2000193">
    <property type="term" value="P:positive regulation of fatty acid transport"/>
    <property type="evidence" value="ECO:0007669"/>
    <property type="project" value="Ensembl"/>
</dbReference>
<dbReference type="GO" id="GO:0046628">
    <property type="term" value="P:positive regulation of insulin receptor signaling pathway"/>
    <property type="evidence" value="ECO:0000318"/>
    <property type="project" value="GO_Central"/>
</dbReference>
<dbReference type="GO" id="GO:0051897">
    <property type="term" value="P:positive regulation of phosphatidylinositol 3-kinase/protein kinase B signal transduction"/>
    <property type="evidence" value="ECO:0000250"/>
    <property type="project" value="UniProtKB"/>
</dbReference>
<dbReference type="GO" id="GO:0019217">
    <property type="term" value="P:regulation of fatty acid metabolic process"/>
    <property type="evidence" value="ECO:0007669"/>
    <property type="project" value="Ensembl"/>
</dbReference>
<dbReference type="FunFam" id="2.60.120.40:FF:000024">
    <property type="entry name" value="erythroferrone isoform X2"/>
    <property type="match status" value="1"/>
</dbReference>
<dbReference type="Gene3D" id="2.60.120.40">
    <property type="match status" value="1"/>
</dbReference>
<dbReference type="InterPro" id="IPR052136">
    <property type="entry name" value="Adipolin/Erythroferrone-rel"/>
</dbReference>
<dbReference type="InterPro" id="IPR001073">
    <property type="entry name" value="C1q_dom"/>
</dbReference>
<dbReference type="InterPro" id="IPR008983">
    <property type="entry name" value="Tumour_necrosis_fac-like_dom"/>
</dbReference>
<dbReference type="PANTHER" id="PTHR24019">
    <property type="entry name" value="ADIPOLIN"/>
    <property type="match status" value="1"/>
</dbReference>
<dbReference type="PANTHER" id="PTHR24019:SF11">
    <property type="entry name" value="ERYTHROFERRONE"/>
    <property type="match status" value="1"/>
</dbReference>
<dbReference type="SUPFAM" id="SSF49842">
    <property type="entry name" value="TNF-like"/>
    <property type="match status" value="1"/>
</dbReference>
<dbReference type="PROSITE" id="PS50871">
    <property type="entry name" value="C1Q"/>
    <property type="match status" value="1"/>
</dbReference>
<gene>
    <name evidence="9" type="primary">ERFE</name>
    <name evidence="9" type="synonym">C1QTNF15</name>
    <name evidence="1" type="synonym">CTRP15</name>
    <name evidence="9" type="synonym">FAM132B</name>
</gene>
<sequence length="354" mass="37279">MAPARRPAGARLLLVYAGLLAAAAAGLGSPEPGAPSRSRARREPPPGNELPRGPGESRAGPAARPPEPTAERAHSVDPRDAWMLFVRQSDKGVNGKKRSRGKAKKLKFGLPGPPGPPGPQGPPGPIIPPEALLKEFQLLLKGAVRQRERAEPEPCTCGPAGPVAASLAPVSATAGEDDDDVVGDVLALLAAPLAPGPRAPRVEAAFLCRLRRDALVERRALHELGVYYLPDAEGAFRRGPGLNLTSGQYRAPVAGFYALAATLHVALGEPPRRGPPRPRDHLRLLICIQSRCQRNASLEAIMGLESSSELFTISVNGVLYLQMGQWTSVFLDNASGCSLTVRSGSHFSAVLLGV</sequence>
<organism>
    <name type="scientific">Homo sapiens</name>
    <name type="common">Human</name>
    <dbReference type="NCBI Taxonomy" id="9606"/>
    <lineage>
        <taxon>Eukaryota</taxon>
        <taxon>Metazoa</taxon>
        <taxon>Chordata</taxon>
        <taxon>Craniata</taxon>
        <taxon>Vertebrata</taxon>
        <taxon>Euteleostomi</taxon>
        <taxon>Mammalia</taxon>
        <taxon>Eutheria</taxon>
        <taxon>Euarchontoglires</taxon>
        <taxon>Primates</taxon>
        <taxon>Haplorrhini</taxon>
        <taxon>Catarrhini</taxon>
        <taxon>Hominidae</taxon>
        <taxon>Homo</taxon>
    </lineage>
</organism>
<accession>Q4G0M1</accession>
<accession>W8S2M9</accession>
<keyword id="KW-1015">Disulfide bond</keyword>
<keyword id="KW-0325">Glycoprotein</keyword>
<keyword id="KW-0372">Hormone</keyword>
<keyword id="KW-0379">Hydroxylation</keyword>
<keyword id="KW-1267">Proteomics identification</keyword>
<keyword id="KW-1185">Reference proteome</keyword>
<keyword id="KW-0964">Secreted</keyword>
<keyword id="KW-0732">Signal</keyword>
<reference key="1">
    <citation type="journal article" date="2014" name="Nat. Genet.">
        <title>Identification of erythroferrone as an erythroid regulator of iron metabolism.</title>
        <authorList>
            <person name="Kautz L."/>
            <person name="Jung G."/>
            <person name="Valore E.V."/>
            <person name="Rivella S."/>
            <person name="Nemeth E."/>
            <person name="Ganz T."/>
        </authorList>
    </citation>
    <scope>NUCLEOTIDE SEQUENCE [MRNA]</scope>
    <scope>FUNCTION</scope>
    <source>
        <tissue>Liver</tissue>
    </source>
</reference>
<reference key="2">
    <citation type="journal article" date="2005" name="Nature">
        <title>Generation and annotation of the DNA sequences of human chromosomes 2 and 4.</title>
        <authorList>
            <person name="Hillier L.W."/>
            <person name="Graves T.A."/>
            <person name="Fulton R.S."/>
            <person name="Fulton L.A."/>
            <person name="Pepin K.H."/>
            <person name="Minx P."/>
            <person name="Wagner-McPherson C."/>
            <person name="Layman D."/>
            <person name="Wylie K."/>
            <person name="Sekhon M."/>
            <person name="Becker M.C."/>
            <person name="Fewell G.A."/>
            <person name="Delehaunty K.D."/>
            <person name="Miner T.L."/>
            <person name="Nash W.E."/>
            <person name="Kremitzki C."/>
            <person name="Oddy L."/>
            <person name="Du H."/>
            <person name="Sun H."/>
            <person name="Bradshaw-Cordum H."/>
            <person name="Ali J."/>
            <person name="Carter J."/>
            <person name="Cordes M."/>
            <person name="Harris A."/>
            <person name="Isak A."/>
            <person name="van Brunt A."/>
            <person name="Nguyen C."/>
            <person name="Du F."/>
            <person name="Courtney L."/>
            <person name="Kalicki J."/>
            <person name="Ozersky P."/>
            <person name="Abbott S."/>
            <person name="Armstrong J."/>
            <person name="Belter E.A."/>
            <person name="Caruso L."/>
            <person name="Cedroni M."/>
            <person name="Cotton M."/>
            <person name="Davidson T."/>
            <person name="Desai A."/>
            <person name="Elliott G."/>
            <person name="Erb T."/>
            <person name="Fronick C."/>
            <person name="Gaige T."/>
            <person name="Haakenson W."/>
            <person name="Haglund K."/>
            <person name="Holmes A."/>
            <person name="Harkins R."/>
            <person name="Kim K."/>
            <person name="Kruchowski S.S."/>
            <person name="Strong C.M."/>
            <person name="Grewal N."/>
            <person name="Goyea E."/>
            <person name="Hou S."/>
            <person name="Levy A."/>
            <person name="Martinka S."/>
            <person name="Mead K."/>
            <person name="McLellan M.D."/>
            <person name="Meyer R."/>
            <person name="Randall-Maher J."/>
            <person name="Tomlinson C."/>
            <person name="Dauphin-Kohlberg S."/>
            <person name="Kozlowicz-Reilly A."/>
            <person name="Shah N."/>
            <person name="Swearengen-Shahid S."/>
            <person name="Snider J."/>
            <person name="Strong J.T."/>
            <person name="Thompson J."/>
            <person name="Yoakum M."/>
            <person name="Leonard S."/>
            <person name="Pearman C."/>
            <person name="Trani L."/>
            <person name="Radionenko M."/>
            <person name="Waligorski J.E."/>
            <person name="Wang C."/>
            <person name="Rock S.M."/>
            <person name="Tin-Wollam A.-M."/>
            <person name="Maupin R."/>
            <person name="Latreille P."/>
            <person name="Wendl M.C."/>
            <person name="Yang S.-P."/>
            <person name="Pohl C."/>
            <person name="Wallis J.W."/>
            <person name="Spieth J."/>
            <person name="Bieri T.A."/>
            <person name="Berkowicz N."/>
            <person name="Nelson J.O."/>
            <person name="Osborne J."/>
            <person name="Ding L."/>
            <person name="Meyer R."/>
            <person name="Sabo A."/>
            <person name="Shotland Y."/>
            <person name="Sinha P."/>
            <person name="Wohldmann P.E."/>
            <person name="Cook L.L."/>
            <person name="Hickenbotham M.T."/>
            <person name="Eldred J."/>
            <person name="Williams D."/>
            <person name="Jones T.A."/>
            <person name="She X."/>
            <person name="Ciccarelli F.D."/>
            <person name="Izaurralde E."/>
            <person name="Taylor J."/>
            <person name="Schmutz J."/>
            <person name="Myers R.M."/>
            <person name="Cox D.R."/>
            <person name="Huang X."/>
            <person name="McPherson J.D."/>
            <person name="Mardis E.R."/>
            <person name="Clifton S.W."/>
            <person name="Warren W.C."/>
            <person name="Chinwalla A.T."/>
            <person name="Eddy S.R."/>
            <person name="Marra M.A."/>
            <person name="Ovcharenko I."/>
            <person name="Furey T.S."/>
            <person name="Miller W."/>
            <person name="Eichler E.E."/>
            <person name="Bork P."/>
            <person name="Suyama M."/>
            <person name="Torrents D."/>
            <person name="Waterston R.H."/>
            <person name="Wilson R.K."/>
        </authorList>
    </citation>
    <scope>NUCLEOTIDE SEQUENCE [LARGE SCALE GENOMIC DNA]</scope>
</reference>
<reference key="3">
    <citation type="journal article" date="2004" name="Genome Res.">
        <title>The status, quality, and expansion of the NIH full-length cDNA project: the Mammalian Gene Collection (MGC).</title>
        <authorList>
            <consortium name="The MGC Project Team"/>
        </authorList>
    </citation>
    <scope>NUCLEOTIDE SEQUENCE [LARGE SCALE MRNA] OF 220-354</scope>
    <source>
        <tissue>Testis</tissue>
    </source>
</reference>
<reference key="4">
    <citation type="journal article" date="2018" name="Blood">
        <title>Erythroferrone inhibits the induction of hepcidin by BMP6.</title>
        <authorList>
            <person name="Arezes J."/>
            <person name="Foy N."/>
            <person name="McHugh K."/>
            <person name="Sawant A."/>
            <person name="Quinkert D."/>
            <person name="Terraube V."/>
            <person name="Brinth A."/>
            <person name="Tam M."/>
            <person name="LaVallie E.R."/>
            <person name="Taylor S."/>
            <person name="Armitage A.E."/>
            <person name="Pasricha S.R."/>
            <person name="Cunningham O."/>
            <person name="Lambert M."/>
            <person name="Draper S.J."/>
            <person name="Jasuja R."/>
            <person name="Drakesmith H."/>
        </authorList>
    </citation>
    <scope>FUNCTION</scope>
    <scope>INTERACTION WITH BMP5; BMP6 AND BMP7</scope>
</reference>
<reference key="5">
    <citation type="journal article" date="2020" name="Blood">
        <title>Erythroferrone lowers hepcidin by sequestering BMP2/6 heterodimer from binding to the BMP type I receptor ALK3.</title>
        <authorList>
            <person name="Wang C.Y."/>
            <person name="Xu Y."/>
            <person name="Traeger L."/>
            <person name="Dogan D.Y."/>
            <person name="Xiao X."/>
            <person name="Steinbicker A.U."/>
            <person name="Babitt J.L."/>
        </authorList>
    </citation>
    <scope>FUNCTION</scope>
    <scope>INTERACTION WITH BMP2 AND BMP6</scope>
</reference>